<proteinExistence type="inferred from homology"/>
<keyword id="KW-1185">Reference proteome</keyword>
<keyword id="KW-0687">Ribonucleoprotein</keyword>
<keyword id="KW-0689">Ribosomal protein</keyword>
<keyword id="KW-0694">RNA-binding</keyword>
<keyword id="KW-0699">rRNA-binding</keyword>
<dbReference type="EMBL" id="CP000112">
    <property type="protein sequence ID" value="ABB39040.1"/>
    <property type="molecule type" value="Genomic_DNA"/>
</dbReference>
<dbReference type="RefSeq" id="WP_011368131.1">
    <property type="nucleotide sequence ID" value="NC_007519.1"/>
</dbReference>
<dbReference type="SMR" id="Q30Z56"/>
<dbReference type="STRING" id="207559.Dde_2243"/>
<dbReference type="KEGG" id="dde:Dde_2243"/>
<dbReference type="eggNOG" id="COG0096">
    <property type="taxonomic scope" value="Bacteria"/>
</dbReference>
<dbReference type="HOGENOM" id="CLU_098428_0_0_7"/>
<dbReference type="Proteomes" id="UP000002710">
    <property type="component" value="Chromosome"/>
</dbReference>
<dbReference type="GO" id="GO:1990904">
    <property type="term" value="C:ribonucleoprotein complex"/>
    <property type="evidence" value="ECO:0007669"/>
    <property type="project" value="UniProtKB-KW"/>
</dbReference>
<dbReference type="GO" id="GO:0005840">
    <property type="term" value="C:ribosome"/>
    <property type="evidence" value="ECO:0007669"/>
    <property type="project" value="UniProtKB-KW"/>
</dbReference>
<dbReference type="GO" id="GO:0019843">
    <property type="term" value="F:rRNA binding"/>
    <property type="evidence" value="ECO:0007669"/>
    <property type="project" value="UniProtKB-UniRule"/>
</dbReference>
<dbReference type="GO" id="GO:0003735">
    <property type="term" value="F:structural constituent of ribosome"/>
    <property type="evidence" value="ECO:0007669"/>
    <property type="project" value="InterPro"/>
</dbReference>
<dbReference type="GO" id="GO:0006412">
    <property type="term" value="P:translation"/>
    <property type="evidence" value="ECO:0007669"/>
    <property type="project" value="UniProtKB-UniRule"/>
</dbReference>
<dbReference type="FunFam" id="3.30.1370.30:FF:000002">
    <property type="entry name" value="30S ribosomal protein S8"/>
    <property type="match status" value="1"/>
</dbReference>
<dbReference type="FunFam" id="3.30.1490.10:FF:000001">
    <property type="entry name" value="30S ribosomal protein S8"/>
    <property type="match status" value="1"/>
</dbReference>
<dbReference type="Gene3D" id="3.30.1370.30">
    <property type="match status" value="1"/>
</dbReference>
<dbReference type="Gene3D" id="3.30.1490.10">
    <property type="match status" value="1"/>
</dbReference>
<dbReference type="HAMAP" id="MF_01302_B">
    <property type="entry name" value="Ribosomal_uS8_B"/>
    <property type="match status" value="1"/>
</dbReference>
<dbReference type="InterPro" id="IPR000630">
    <property type="entry name" value="Ribosomal_uS8"/>
</dbReference>
<dbReference type="InterPro" id="IPR047863">
    <property type="entry name" value="Ribosomal_uS8_CS"/>
</dbReference>
<dbReference type="InterPro" id="IPR035987">
    <property type="entry name" value="Ribosomal_uS8_sf"/>
</dbReference>
<dbReference type="NCBIfam" id="NF001109">
    <property type="entry name" value="PRK00136.1"/>
    <property type="match status" value="1"/>
</dbReference>
<dbReference type="PANTHER" id="PTHR11758">
    <property type="entry name" value="40S RIBOSOMAL PROTEIN S15A"/>
    <property type="match status" value="1"/>
</dbReference>
<dbReference type="Pfam" id="PF00410">
    <property type="entry name" value="Ribosomal_S8"/>
    <property type="match status" value="1"/>
</dbReference>
<dbReference type="SUPFAM" id="SSF56047">
    <property type="entry name" value="Ribosomal protein S8"/>
    <property type="match status" value="1"/>
</dbReference>
<dbReference type="PROSITE" id="PS00053">
    <property type="entry name" value="RIBOSOMAL_S8"/>
    <property type="match status" value="1"/>
</dbReference>
<reference key="1">
    <citation type="journal article" date="2011" name="J. Bacteriol.">
        <title>Complete genome sequence and updated annotation of Desulfovibrio alaskensis G20.</title>
        <authorList>
            <person name="Hauser L.J."/>
            <person name="Land M.L."/>
            <person name="Brown S.D."/>
            <person name="Larimer F."/>
            <person name="Keller K.L."/>
            <person name="Rapp-Giles B.J."/>
            <person name="Price M.N."/>
            <person name="Lin M."/>
            <person name="Bruce D.C."/>
            <person name="Detter J.C."/>
            <person name="Tapia R."/>
            <person name="Han C.S."/>
            <person name="Goodwin L.A."/>
            <person name="Cheng J.F."/>
            <person name="Pitluck S."/>
            <person name="Copeland A."/>
            <person name="Lucas S."/>
            <person name="Nolan M."/>
            <person name="Lapidus A.L."/>
            <person name="Palumbo A.V."/>
            <person name="Wall J.D."/>
        </authorList>
    </citation>
    <scope>NUCLEOTIDE SEQUENCE [LARGE SCALE GENOMIC DNA]</scope>
    <source>
        <strain>ATCC BAA-1058 / DSM 17464 / G20</strain>
    </source>
</reference>
<sequence>MLTDPIADMLTRIRNAHLALHKEVSVPRSKMKEALAAILKEEGYITDFKMEESSIVIELKYFKGKPVISGLKRISKSGRRVYVGSTDIPRVQNGLGICILSTSSGVLEGTNARSKNVGGELLCEIW</sequence>
<accession>Q30Z56</accession>
<gene>
    <name evidence="1" type="primary">rpsH</name>
    <name type="ordered locus">Dde_2243</name>
</gene>
<organism>
    <name type="scientific">Oleidesulfovibrio alaskensis (strain ATCC BAA-1058 / DSM 17464 / G20)</name>
    <name type="common">Desulfovibrio alaskensis</name>
    <dbReference type="NCBI Taxonomy" id="207559"/>
    <lineage>
        <taxon>Bacteria</taxon>
        <taxon>Pseudomonadati</taxon>
        <taxon>Thermodesulfobacteriota</taxon>
        <taxon>Desulfovibrionia</taxon>
        <taxon>Desulfovibrionales</taxon>
        <taxon>Desulfovibrionaceae</taxon>
        <taxon>Oleidesulfovibrio</taxon>
    </lineage>
</organism>
<feature type="chain" id="PRO_0000225870" description="Small ribosomal subunit protein uS8">
    <location>
        <begin position="1"/>
        <end position="126"/>
    </location>
</feature>
<protein>
    <recommendedName>
        <fullName evidence="1">Small ribosomal subunit protein uS8</fullName>
    </recommendedName>
    <alternativeName>
        <fullName evidence="2">30S ribosomal protein S8</fullName>
    </alternativeName>
</protein>
<name>RS8_OLEA2</name>
<comment type="function">
    <text evidence="1">One of the primary rRNA binding proteins, it binds directly to 16S rRNA central domain where it helps coordinate assembly of the platform of the 30S subunit.</text>
</comment>
<comment type="subunit">
    <text evidence="1">Part of the 30S ribosomal subunit. Contacts proteins S5 and S12.</text>
</comment>
<comment type="similarity">
    <text evidence="1">Belongs to the universal ribosomal protein uS8 family.</text>
</comment>
<evidence type="ECO:0000255" key="1">
    <source>
        <dbReference type="HAMAP-Rule" id="MF_01302"/>
    </source>
</evidence>
<evidence type="ECO:0000305" key="2"/>